<comment type="function">
    <text evidence="1 3">D-type phospholipase that hydrolyzes N-acyl-phosphatidylethanolamines (NAPEs) to produce bioactive N-acylethanolamines/fatty acid ethanolamides (NAEs/FAEs) and phosphatidic acid (By similarity). Cleaves the terminal phosphodiester bond of diacyl- and alkenylacyl-NAPEs, primarily playing a role in the generation of long-chain saturated and monounsaturated NAEs in the brain (By similarity). May control NAPE homeostasis in dopaminergic neuron membranes and regulate neuron survival, partly through RAC1 activation (By similarity). As a regulator of lipid metabolism in the adipose tissue, mediates the crosstalk between adipocytes, gut microbiota and immune cells to control body temperature and weight. In particular, regulates energy homeostasis by promoting cold-induced brown or beige adipocyte differentiation program to generate heat from fatty acids and glucose. Has limited D-type phospholipase activity toward N-acyl lyso-NAPEs (By similarity).</text>
</comment>
<comment type="catalytic activity">
    <reaction evidence="1 3">
        <text>an N-acyl-1,2-diacyl-sn-glycero-3-phosphoethanolamine + H2O = an N-acylethanolamine + a 1,2-diacyl-sn-glycero-3-phosphate + H(+)</text>
        <dbReference type="Rhea" id="RHEA:33159"/>
        <dbReference type="ChEBI" id="CHEBI:15377"/>
        <dbReference type="ChEBI" id="CHEBI:15378"/>
        <dbReference type="ChEBI" id="CHEBI:52640"/>
        <dbReference type="ChEBI" id="CHEBI:58608"/>
        <dbReference type="ChEBI" id="CHEBI:62537"/>
        <dbReference type="EC" id="3.1.4.54"/>
    </reaction>
</comment>
<comment type="catalytic activity">
    <reaction evidence="2">
        <text>N-butanoyl-1-hexadecanoyl-2-(9Z,12Z-octadecadienoyl)-sn-glycero-3-phosphoethanolamine + H2O = N-butanoyl ethanolamine + 1-hexadecanoyl-2-(9Z,12Z-octadecadienoyl)-sn-glycero-3-phosphate + H(+)</text>
        <dbReference type="Rhea" id="RHEA:45620"/>
        <dbReference type="ChEBI" id="CHEBI:15377"/>
        <dbReference type="ChEBI" id="CHEBI:15378"/>
        <dbReference type="ChEBI" id="CHEBI:72860"/>
        <dbReference type="ChEBI" id="CHEBI:85298"/>
        <dbReference type="ChEBI" id="CHEBI:85304"/>
    </reaction>
    <physiologicalReaction direction="left-to-right" evidence="2">
        <dbReference type="Rhea" id="RHEA:45621"/>
    </physiologicalReaction>
</comment>
<comment type="catalytic activity">
    <reaction evidence="2">
        <text>N-hexanoyl-1-hexadecanoyl-2-(9Z,12Z-octadecadienoyl)-sn-glycero-3-phosphoethanolamine + H2O = N-hexanoyl ethanolamine + 1-hexadecanoyl-2-(9Z,12Z-octadecadienoyl)-sn-glycero-3-phosphate + H(+)</text>
        <dbReference type="Rhea" id="RHEA:45616"/>
        <dbReference type="ChEBI" id="CHEBI:15377"/>
        <dbReference type="ChEBI" id="CHEBI:15378"/>
        <dbReference type="ChEBI" id="CHEBI:72860"/>
        <dbReference type="ChEBI" id="CHEBI:85297"/>
        <dbReference type="ChEBI" id="CHEBI:85303"/>
    </reaction>
    <physiologicalReaction direction="left-to-right" evidence="2">
        <dbReference type="Rhea" id="RHEA:45617"/>
    </physiologicalReaction>
</comment>
<comment type="catalytic activity">
    <reaction evidence="2">
        <text>N-octanoyl-1-hexadecanoyl-2-(9Z,12Z-octadecadienoyl)-sn-glycero-3-phosphoethanolamine + H2O = N-octanoyl ethanolamine + 1-hexadecanoyl-2-(9Z,12Z-octadecadienoyl)-sn-glycero-3-phosphate + H(+)</text>
        <dbReference type="Rhea" id="RHEA:45612"/>
        <dbReference type="ChEBI" id="CHEBI:15377"/>
        <dbReference type="ChEBI" id="CHEBI:15378"/>
        <dbReference type="ChEBI" id="CHEBI:72860"/>
        <dbReference type="ChEBI" id="CHEBI:85296"/>
        <dbReference type="ChEBI" id="CHEBI:85302"/>
    </reaction>
    <physiologicalReaction direction="left-to-right" evidence="2">
        <dbReference type="Rhea" id="RHEA:45613"/>
    </physiologicalReaction>
</comment>
<comment type="catalytic activity">
    <reaction evidence="2">
        <text>N-decanoyl-1-hexadecanoyl-2-(9Z,12Z-octadecadienoyl)-sn-glycero-3-phosphoethanolamine + H2O = N-decanoyl ethanolamine + 1-hexadecanoyl-2-(9Z,12Z-octadecadienoyl)-sn-glycero-3-phosphate + H(+)</text>
        <dbReference type="Rhea" id="RHEA:45608"/>
        <dbReference type="ChEBI" id="CHEBI:15377"/>
        <dbReference type="ChEBI" id="CHEBI:15378"/>
        <dbReference type="ChEBI" id="CHEBI:72860"/>
        <dbReference type="ChEBI" id="CHEBI:85295"/>
        <dbReference type="ChEBI" id="CHEBI:85301"/>
    </reaction>
    <physiologicalReaction direction="left-to-right" evidence="2">
        <dbReference type="Rhea" id="RHEA:45609"/>
    </physiologicalReaction>
</comment>
<comment type="catalytic activity">
    <reaction evidence="2">
        <text>N-dodecanoyl-1,2-di-(9Z-octadecenoyl)-sn-glycero-3-phosphoethanolamine + H2O = N-dodecanoylethanolamine + 1,2-di-(9Z-octadecenoyl)-sn-glycero-3-phosphate + H(+)</text>
        <dbReference type="Rhea" id="RHEA:45556"/>
        <dbReference type="ChEBI" id="CHEBI:15377"/>
        <dbReference type="ChEBI" id="CHEBI:15378"/>
        <dbReference type="ChEBI" id="CHEBI:74546"/>
        <dbReference type="ChEBI" id="CHEBI:85263"/>
        <dbReference type="ChEBI" id="CHEBI:85294"/>
    </reaction>
    <physiologicalReaction direction="left-to-right" evidence="2">
        <dbReference type="Rhea" id="RHEA:45557"/>
    </physiologicalReaction>
</comment>
<comment type="catalytic activity">
    <reaction evidence="2">
        <text>N-tetradecanoyl-1,2-di-(9Z-octadecenoyl)-sn-glycero-3-phosphoethanolamine + H2O = N-tetradecanoylethanolamine + 1,2-di-(9Z-octadecenoyl)-sn-glycero-3-phosphate + H(+)</text>
        <dbReference type="Rhea" id="RHEA:45552"/>
        <dbReference type="ChEBI" id="CHEBI:15377"/>
        <dbReference type="ChEBI" id="CHEBI:15378"/>
        <dbReference type="ChEBI" id="CHEBI:74546"/>
        <dbReference type="ChEBI" id="CHEBI:85262"/>
        <dbReference type="ChEBI" id="CHEBI:85293"/>
    </reaction>
    <physiologicalReaction direction="left-to-right" evidence="2">
        <dbReference type="Rhea" id="RHEA:45553"/>
    </physiologicalReaction>
</comment>
<comment type="catalytic activity">
    <reaction evidence="1">
        <text>N-hexadecanoyl-1,2-di-(9Z-octadecenoyl)-sn-glycero-3-phosphoethanolamine + H2O = N-hexadecanoylethanolamine + 1,2-di-(9Z-octadecenoyl)-sn-glycero-3-phosphate + H(+)</text>
        <dbReference type="Rhea" id="RHEA:45540"/>
        <dbReference type="ChEBI" id="CHEBI:15377"/>
        <dbReference type="ChEBI" id="CHEBI:15378"/>
        <dbReference type="ChEBI" id="CHEBI:71464"/>
        <dbReference type="ChEBI" id="CHEBI:74546"/>
        <dbReference type="ChEBI" id="CHEBI:78097"/>
    </reaction>
    <physiologicalReaction direction="left-to-right" evidence="1">
        <dbReference type="Rhea" id="RHEA:45541"/>
    </physiologicalReaction>
</comment>
<comment type="catalytic activity">
    <reaction evidence="3">
        <text>N,1-dihexadecanoyl-2-(9Z,12Z-octadecadienoyl)-sn-glycero-3-phosphoethanolamine + H2O = 1-hexadecanoyl-2-(9Z,12Z-octadecadienoyl)-sn-glycero-3-phosphate + N-hexadecanoylethanolamine + H(+)</text>
        <dbReference type="Rhea" id="RHEA:45596"/>
        <dbReference type="ChEBI" id="CHEBI:15377"/>
        <dbReference type="ChEBI" id="CHEBI:15378"/>
        <dbReference type="ChEBI" id="CHEBI:71464"/>
        <dbReference type="ChEBI" id="CHEBI:72860"/>
        <dbReference type="ChEBI" id="CHEBI:85334"/>
    </reaction>
    <physiologicalReaction direction="left-to-right" evidence="3">
        <dbReference type="Rhea" id="RHEA:45597"/>
    </physiologicalReaction>
</comment>
<comment type="catalytic activity">
    <reaction evidence="2 3">
        <text>N-octadecanoyl-1,2-di-(9Z-octadecenoyl)-sn-glycero-3-phosphoethanolamine + H2O = N-octadecanoyl ethanolamine + 1,2-di-(9Z-octadecenoyl)-sn-glycero-3-phosphate + H(+)</text>
        <dbReference type="Rhea" id="RHEA:45536"/>
        <dbReference type="ChEBI" id="CHEBI:15377"/>
        <dbReference type="ChEBI" id="CHEBI:15378"/>
        <dbReference type="ChEBI" id="CHEBI:74546"/>
        <dbReference type="ChEBI" id="CHEBI:85292"/>
        <dbReference type="ChEBI" id="CHEBI:85299"/>
    </reaction>
    <physiologicalReaction direction="left-to-right" evidence="2 3">
        <dbReference type="Rhea" id="RHEA:45537"/>
    </physiologicalReaction>
</comment>
<comment type="catalytic activity">
    <reaction evidence="2 3">
        <text>N,1,2-tri-(9Z-octadecenoyl)-sn-glycero-3-phosphoethanolamine + H2O = N-(9Z-octadecenoyl) ethanolamine + 1,2-di-(9Z-octadecenoyl)-sn-glycero-3-phosphate + H(+)</text>
        <dbReference type="Rhea" id="RHEA:45532"/>
        <dbReference type="ChEBI" id="CHEBI:15377"/>
        <dbReference type="ChEBI" id="CHEBI:15378"/>
        <dbReference type="ChEBI" id="CHEBI:71466"/>
        <dbReference type="ChEBI" id="CHEBI:74546"/>
        <dbReference type="ChEBI" id="CHEBI:85291"/>
    </reaction>
    <physiologicalReaction direction="left-to-right" evidence="2 3">
        <dbReference type="Rhea" id="RHEA:45533"/>
    </physiologicalReaction>
</comment>
<comment type="catalytic activity">
    <reaction evidence="1">
        <text>N-(5Z,8Z,11Z,14Z-eicosatetraenoyl)-1,2-diacyl-sn-glycero-3-phosphoethanolamine + H2O = N-(5Z,8Z,11Z,14Z-eicosatetraenoyl)-ethanolamine + a 1,2-diacyl-sn-glycero-3-phosphate + H(+)</text>
        <dbReference type="Rhea" id="RHEA:56548"/>
        <dbReference type="ChEBI" id="CHEBI:2700"/>
        <dbReference type="ChEBI" id="CHEBI:15377"/>
        <dbReference type="ChEBI" id="CHEBI:15378"/>
        <dbReference type="ChEBI" id="CHEBI:58608"/>
        <dbReference type="ChEBI" id="CHEBI:140532"/>
    </reaction>
    <physiologicalReaction direction="left-to-right" evidence="1">
        <dbReference type="Rhea" id="RHEA:56549"/>
    </physiologicalReaction>
</comment>
<comment type="catalytic activity">
    <reaction evidence="2 3">
        <text>N-(5Z,8Z,11Z,14Z-eicosatetraenoyl)-1,2-di-(9Z-octadecenoyl)-sn-glycero-3-phosphoethanolamine + H2O = N-(5Z,8Z,11Z,14Z-eicosatetraenoyl)-ethanolamine + 1,2-di-(9Z-octadecenoyl)-sn-glycero-3-phosphate + H(+)</text>
        <dbReference type="Rhea" id="RHEA:45528"/>
        <dbReference type="ChEBI" id="CHEBI:2700"/>
        <dbReference type="ChEBI" id="CHEBI:15377"/>
        <dbReference type="ChEBI" id="CHEBI:15378"/>
        <dbReference type="ChEBI" id="CHEBI:74546"/>
        <dbReference type="ChEBI" id="CHEBI:85277"/>
    </reaction>
    <physiologicalReaction direction="left-to-right" evidence="2 3">
        <dbReference type="Rhea" id="RHEA:45529"/>
    </physiologicalReaction>
</comment>
<comment type="catalytic activity">
    <reaction evidence="3">
        <text>1-O-(1Z-octadecenoyl)-2-(9Z-octadecenoyl)-sn-glycero-3-phospho-N-hexadecanoyl-ethanolamine + H2O = 1-O-(1Z-octadecenoyl)-2-(9Z-octadecenoyl)-sn-glycero-3-phosphate + N-hexadecanoylethanolamine + H(+)</text>
        <dbReference type="Rhea" id="RHEA:56464"/>
        <dbReference type="ChEBI" id="CHEBI:15377"/>
        <dbReference type="ChEBI" id="CHEBI:15378"/>
        <dbReference type="ChEBI" id="CHEBI:71464"/>
        <dbReference type="ChEBI" id="CHEBI:138663"/>
        <dbReference type="ChEBI" id="CHEBI:140452"/>
    </reaction>
    <physiologicalReaction direction="left-to-right" evidence="3">
        <dbReference type="Rhea" id="RHEA:56465"/>
    </physiologicalReaction>
</comment>
<comment type="catalytic activity">
    <reaction evidence="3">
        <text>N,1-diacyl-sn-glycero-3-phosphoethanolamine + H2O = an N-acylethanolamine + a 1-acyl-sn-glycero-3-phosphate + H(+)</text>
        <dbReference type="Rhea" id="RHEA:53164"/>
        <dbReference type="ChEBI" id="CHEBI:15377"/>
        <dbReference type="ChEBI" id="CHEBI:15378"/>
        <dbReference type="ChEBI" id="CHEBI:52640"/>
        <dbReference type="ChEBI" id="CHEBI:57970"/>
        <dbReference type="ChEBI" id="CHEBI:85216"/>
    </reaction>
    <physiologicalReaction direction="left-to-right" evidence="3">
        <dbReference type="Rhea" id="RHEA:53165"/>
    </physiologicalReaction>
</comment>
<comment type="catalytic activity">
    <reaction evidence="3">
        <text>N,1-dihexadecanoyl-sn-glycero-3-phosphoethanolamine + H2O = N-hexadecanoylethanolamine + 1-hexadecanoyl-sn-glycero-3-phosphate + H(+)</text>
        <dbReference type="Rhea" id="RHEA:45592"/>
        <dbReference type="ChEBI" id="CHEBI:15377"/>
        <dbReference type="ChEBI" id="CHEBI:15378"/>
        <dbReference type="ChEBI" id="CHEBI:57518"/>
        <dbReference type="ChEBI" id="CHEBI:71464"/>
        <dbReference type="ChEBI" id="CHEBI:85335"/>
    </reaction>
    <physiologicalReaction direction="left-to-right" evidence="3">
        <dbReference type="Rhea" id="RHEA:45593"/>
    </physiologicalReaction>
</comment>
<comment type="catalytic activity">
    <reaction evidence="3">
        <text>N-(5Z,8Z,11Z,14Z-eicosatetraenoyl)-1-(9Z-octadecenoyl)-sn-glycero-3-phosphoethanolamine + H2O = N-(5Z,8Z,11Z,14Z-eicosatetraenoyl)-ethanolamine + 1-(9Z-octadecenoyl)-sn-glycero-3-phosphate + H(+)</text>
        <dbReference type="Rhea" id="RHEA:45544"/>
        <dbReference type="ChEBI" id="CHEBI:2700"/>
        <dbReference type="ChEBI" id="CHEBI:15377"/>
        <dbReference type="ChEBI" id="CHEBI:15378"/>
        <dbReference type="ChEBI" id="CHEBI:74544"/>
        <dbReference type="ChEBI" id="CHEBI:85223"/>
    </reaction>
    <physiologicalReaction direction="left-to-right" evidence="3">
        <dbReference type="Rhea" id="RHEA:45545"/>
    </physiologicalReaction>
</comment>
<comment type="cofactor">
    <cofactor evidence="1">
        <name>Zn(2+)</name>
        <dbReference type="ChEBI" id="CHEBI:29105"/>
    </cofactor>
    <text evidence="1">Binds 2 zinc divalent cations per subunit.</text>
</comment>
<comment type="activity regulation">
    <text evidence="1">Activated by divalent cations. Activated by bile acids.</text>
</comment>
<comment type="subunit">
    <text evidence="1">Homodimer. Bile acids promote the assembly of inactive monomers into an active dimer and enable catalysis.</text>
</comment>
<comment type="subcellular location">
    <subcellularLocation>
        <location evidence="1">Golgi apparatus membrane</location>
        <topology evidence="1">Peripheral membrane protein</topology>
    </subcellularLocation>
    <subcellularLocation>
        <location evidence="1">Early endosome membrane</location>
        <topology evidence="1">Peripheral membrane protein</topology>
    </subcellularLocation>
    <subcellularLocation>
        <location evidence="1">Nucleus envelope</location>
    </subcellularLocation>
    <subcellularLocation>
        <location evidence="1">Nucleus</location>
        <location evidence="1">Nucleoplasm</location>
    </subcellularLocation>
    <text evidence="1">Localized in the proximity of the cellular membranes likely through interaction with membrane phospholipids.</text>
</comment>
<comment type="tissue specificity">
    <text evidence="3">Widely expressed. Highest expression in brain, kidney and testis (at protein level). Expressed in adipose tissue (at protein level).</text>
</comment>
<comment type="similarity">
    <text evidence="5">Belongs to the NAPE-PLD family.</text>
</comment>
<sequence length="393" mass="45644">MDENESNQSLMTSSQYPKEAVRKRQNSARNSGGSDSSRFSRKSFKLDYRLEEDVTKSKKGKDGRFVNPWPTWKNHSIPHVLRWLIMEKDHSSVPSSKEELDKELPVLKPYFITNPEEAGVRETGLRVTWLGHATVMVEMDELIFLTDPIFSSRASPSQYMGPKRFRRSPCTISELPPIDAVLISHNHYDHLDYNSVIALNERFGNELRWFVPLGLLDWMQKCGCENVIELDWWEENCVPGHDKVTFVFTPSQHWCKRTLMDDNKVLWGSWSVLGPWNRFFFAGDTGYCPAFEEIGKRFGPFDLAAIPIGAYEPRRFMKYQHVDPEEAVRIHIDVQTKKSMAIHWGTFALANEHYLEPPVKLNEALERYGLNAEDFFVLKHGESRYLNTDDENF</sequence>
<accession>Q5RCU3</accession>
<dbReference type="EC" id="3.1.4.54" evidence="1 3"/>
<dbReference type="EMBL" id="CR858175">
    <property type="protein sequence ID" value="CAH90414.1"/>
    <property type="molecule type" value="mRNA"/>
</dbReference>
<dbReference type="RefSeq" id="NP_001125208.1">
    <property type="nucleotide sequence ID" value="NM_001131736.1"/>
</dbReference>
<dbReference type="SMR" id="Q5RCU3"/>
<dbReference type="FunCoup" id="Q5RCU3">
    <property type="interactions" value="882"/>
</dbReference>
<dbReference type="STRING" id="9601.ENSPPYP00000020040"/>
<dbReference type="GeneID" id="100172099"/>
<dbReference type="KEGG" id="pon:100172099"/>
<dbReference type="CTD" id="222236"/>
<dbReference type="eggNOG" id="KOG3798">
    <property type="taxonomic scope" value="Eukaryota"/>
</dbReference>
<dbReference type="InParanoid" id="Q5RCU3"/>
<dbReference type="OrthoDB" id="332863at2759"/>
<dbReference type="Proteomes" id="UP000001595">
    <property type="component" value="Unplaced"/>
</dbReference>
<dbReference type="GO" id="GO:0005769">
    <property type="term" value="C:early endosome"/>
    <property type="evidence" value="ECO:0000250"/>
    <property type="project" value="UniProtKB"/>
</dbReference>
<dbReference type="GO" id="GO:0031901">
    <property type="term" value="C:early endosome membrane"/>
    <property type="evidence" value="ECO:0007669"/>
    <property type="project" value="UniProtKB-SubCell"/>
</dbReference>
<dbReference type="GO" id="GO:0005794">
    <property type="term" value="C:Golgi apparatus"/>
    <property type="evidence" value="ECO:0000250"/>
    <property type="project" value="UniProtKB"/>
</dbReference>
<dbReference type="GO" id="GO:0000139">
    <property type="term" value="C:Golgi membrane"/>
    <property type="evidence" value="ECO:0007669"/>
    <property type="project" value="UniProtKB-SubCell"/>
</dbReference>
<dbReference type="GO" id="GO:0005635">
    <property type="term" value="C:nuclear envelope"/>
    <property type="evidence" value="ECO:0000250"/>
    <property type="project" value="UniProtKB"/>
</dbReference>
<dbReference type="GO" id="GO:0005654">
    <property type="term" value="C:nucleoplasm"/>
    <property type="evidence" value="ECO:0000250"/>
    <property type="project" value="UniProtKB"/>
</dbReference>
<dbReference type="GO" id="GO:0070290">
    <property type="term" value="F:N-acylphosphatidylethanolamine-specific phospholipase D activity"/>
    <property type="evidence" value="ECO:0000250"/>
    <property type="project" value="UniProtKB"/>
</dbReference>
<dbReference type="GO" id="GO:0008270">
    <property type="term" value="F:zinc ion binding"/>
    <property type="evidence" value="ECO:0000250"/>
    <property type="project" value="UniProtKB"/>
</dbReference>
<dbReference type="GO" id="GO:0048874">
    <property type="term" value="P:host-mediated regulation of intestinal microbiota composition"/>
    <property type="evidence" value="ECO:0000250"/>
    <property type="project" value="UniProtKB"/>
</dbReference>
<dbReference type="GO" id="GO:0070291">
    <property type="term" value="P:N-acylethanolamine metabolic process"/>
    <property type="evidence" value="ECO:0007669"/>
    <property type="project" value="TreeGrafter"/>
</dbReference>
<dbReference type="GO" id="GO:0070292">
    <property type="term" value="P:N-acylphosphatidylethanolamine metabolic process"/>
    <property type="evidence" value="ECO:0000250"/>
    <property type="project" value="UniProtKB"/>
</dbReference>
<dbReference type="GO" id="GO:0009395">
    <property type="term" value="P:phospholipid catabolic process"/>
    <property type="evidence" value="ECO:0007669"/>
    <property type="project" value="UniProtKB-KW"/>
</dbReference>
<dbReference type="GO" id="GO:0090336">
    <property type="term" value="P:positive regulation of brown fat cell differentiation"/>
    <property type="evidence" value="ECO:0000250"/>
    <property type="project" value="UniProtKB"/>
</dbReference>
<dbReference type="GO" id="GO:0050729">
    <property type="term" value="P:positive regulation of inflammatory response"/>
    <property type="evidence" value="ECO:0000250"/>
    <property type="project" value="UniProtKB"/>
</dbReference>
<dbReference type="GO" id="GO:0001659">
    <property type="term" value="P:temperature homeostasis"/>
    <property type="evidence" value="ECO:0000250"/>
    <property type="project" value="UniProtKB"/>
</dbReference>
<dbReference type="FunFam" id="3.60.15.10:FF:000016">
    <property type="entry name" value="N-acyl-phosphatidylethanolamine-hydrolyzing phospholipase D, putative"/>
    <property type="match status" value="1"/>
</dbReference>
<dbReference type="Gene3D" id="3.60.15.10">
    <property type="entry name" value="Ribonuclease Z/Hydroxyacylglutathione hydrolase-like"/>
    <property type="match status" value="1"/>
</dbReference>
<dbReference type="InterPro" id="IPR001279">
    <property type="entry name" value="Metallo-B-lactamas"/>
</dbReference>
<dbReference type="InterPro" id="IPR024884">
    <property type="entry name" value="NAPE-PLD"/>
</dbReference>
<dbReference type="InterPro" id="IPR036866">
    <property type="entry name" value="RibonucZ/Hydroxyglut_hydro"/>
</dbReference>
<dbReference type="PANTHER" id="PTHR15032">
    <property type="entry name" value="N-ACYL-PHOSPHATIDYLETHANOLAMINE-HYDROLYZING PHOSPHOLIPASE D"/>
    <property type="match status" value="1"/>
</dbReference>
<dbReference type="PANTHER" id="PTHR15032:SF4">
    <property type="entry name" value="N-ACYL-PHOSPHATIDYLETHANOLAMINE-HYDROLYZING PHOSPHOLIPASE D"/>
    <property type="match status" value="1"/>
</dbReference>
<dbReference type="Pfam" id="PF12706">
    <property type="entry name" value="Lactamase_B_2"/>
    <property type="match status" value="1"/>
</dbReference>
<dbReference type="PIRSF" id="PIRSF038896">
    <property type="entry name" value="NAPE-PLD"/>
    <property type="match status" value="1"/>
</dbReference>
<dbReference type="SUPFAM" id="SSF56281">
    <property type="entry name" value="Metallo-hydrolase/oxidoreductase"/>
    <property type="match status" value="1"/>
</dbReference>
<keyword id="KW-0007">Acetylation</keyword>
<keyword id="KW-0967">Endosome</keyword>
<keyword id="KW-0333">Golgi apparatus</keyword>
<keyword id="KW-0378">Hydrolase</keyword>
<keyword id="KW-0442">Lipid degradation</keyword>
<keyword id="KW-0443">Lipid metabolism</keyword>
<keyword id="KW-0472">Membrane</keyword>
<keyword id="KW-0479">Metal-binding</keyword>
<keyword id="KW-0539">Nucleus</keyword>
<keyword id="KW-0595">Phospholipid degradation</keyword>
<keyword id="KW-1208">Phospholipid metabolism</keyword>
<keyword id="KW-1185">Reference proteome</keyword>
<keyword id="KW-0862">Zinc</keyword>
<evidence type="ECO:0000250" key="1">
    <source>
        <dbReference type="UniProtKB" id="Q6IQ20"/>
    </source>
</evidence>
<evidence type="ECO:0000250" key="2">
    <source>
        <dbReference type="UniProtKB" id="Q769K2"/>
    </source>
</evidence>
<evidence type="ECO:0000250" key="3">
    <source>
        <dbReference type="UniProtKB" id="Q8BH82"/>
    </source>
</evidence>
<evidence type="ECO:0000256" key="4">
    <source>
        <dbReference type="SAM" id="MobiDB-lite"/>
    </source>
</evidence>
<evidence type="ECO:0000305" key="5"/>
<organism>
    <name type="scientific">Pongo abelii</name>
    <name type="common">Sumatran orangutan</name>
    <name type="synonym">Pongo pygmaeus abelii</name>
    <dbReference type="NCBI Taxonomy" id="9601"/>
    <lineage>
        <taxon>Eukaryota</taxon>
        <taxon>Metazoa</taxon>
        <taxon>Chordata</taxon>
        <taxon>Craniata</taxon>
        <taxon>Vertebrata</taxon>
        <taxon>Euteleostomi</taxon>
        <taxon>Mammalia</taxon>
        <taxon>Eutheria</taxon>
        <taxon>Euarchontoglires</taxon>
        <taxon>Primates</taxon>
        <taxon>Haplorrhini</taxon>
        <taxon>Catarrhini</taxon>
        <taxon>Hominidae</taxon>
        <taxon>Pongo</taxon>
    </lineage>
</organism>
<protein>
    <recommendedName>
        <fullName>N-acyl-phosphatidylethanolamine-hydrolyzing phospholipase D</fullName>
        <shortName>N-acyl phosphatidylethanolamine phospholipase D</shortName>
        <shortName>NAPE-PLD</shortName>
        <shortName>NAPE-hydrolyzing phospholipase D</shortName>
        <ecNumber evidence="1 3">3.1.4.54</ecNumber>
    </recommendedName>
</protein>
<proteinExistence type="evidence at transcript level"/>
<gene>
    <name type="primary">NAPEPLD</name>
</gene>
<name>NAPEP_PONAB</name>
<feature type="chain" id="PRO_0000318161" description="N-acyl-phosphatidylethanolamine-hydrolyzing phospholipase D">
    <location>
        <begin position="1"/>
        <end position="393"/>
    </location>
</feature>
<feature type="region of interest" description="Disordered" evidence="4">
    <location>
        <begin position="1"/>
        <end position="40"/>
    </location>
</feature>
<feature type="compositionally biased region" description="Polar residues" evidence="4">
    <location>
        <begin position="1"/>
        <end position="16"/>
    </location>
</feature>
<feature type="binding site" evidence="1">
    <location>
        <position position="185"/>
    </location>
    <ligand>
        <name>Zn(2+)</name>
        <dbReference type="ChEBI" id="CHEBI:29105"/>
        <label>1</label>
    </ligand>
</feature>
<feature type="binding site" evidence="1">
    <location>
        <position position="187"/>
    </location>
    <ligand>
        <name>Zn(2+)</name>
        <dbReference type="ChEBI" id="CHEBI:29105"/>
        <label>1</label>
    </ligand>
</feature>
<feature type="binding site" evidence="1">
    <location>
        <position position="188"/>
    </location>
    <ligand>
        <name>an N-acyl-1,2-diacyl-sn-glycero-3-phosphoethanolamine</name>
        <dbReference type="ChEBI" id="CHEBI:62537"/>
    </ligand>
</feature>
<feature type="binding site" evidence="1">
    <location>
        <position position="189"/>
    </location>
    <ligand>
        <name>Zn(2+)</name>
        <dbReference type="ChEBI" id="CHEBI:29105"/>
        <label>2</label>
    </ligand>
</feature>
<feature type="binding site" evidence="1">
    <location>
        <position position="190"/>
    </location>
    <ligand>
        <name>Zn(2+)</name>
        <dbReference type="ChEBI" id="CHEBI:29105"/>
        <label>2</label>
    </ligand>
</feature>
<feature type="binding site" evidence="1">
    <location>
        <position position="253"/>
    </location>
    <ligand>
        <name>Zn(2+)</name>
        <dbReference type="ChEBI" id="CHEBI:29105"/>
        <label>1</label>
    </ligand>
</feature>
<feature type="binding site" evidence="1">
    <location>
        <position position="256"/>
    </location>
    <ligand>
        <name>deoxycholate</name>
        <dbReference type="ChEBI" id="CHEBI:23614"/>
    </ligand>
</feature>
<feature type="binding site" evidence="1">
    <location>
        <position position="260"/>
    </location>
    <ligand>
        <name>deoxycholate</name>
        <dbReference type="ChEBI" id="CHEBI:23614"/>
    </ligand>
</feature>
<feature type="binding site" evidence="1">
    <location>
        <position position="284"/>
    </location>
    <ligand>
        <name>Zn(2+)</name>
        <dbReference type="ChEBI" id="CHEBI:29105"/>
        <label>1</label>
    </ligand>
</feature>
<feature type="binding site" evidence="1">
    <location>
        <position position="284"/>
    </location>
    <ligand>
        <name>Zn(2+)</name>
        <dbReference type="ChEBI" id="CHEBI:29105"/>
        <label>2</label>
    </ligand>
</feature>
<feature type="binding site" evidence="1">
    <location>
        <position position="321"/>
    </location>
    <ligand>
        <name>an N-acyl-1,2-diacyl-sn-glycero-3-phosphoethanolamine</name>
        <dbReference type="ChEBI" id="CHEBI:62537"/>
    </ligand>
</feature>
<feature type="binding site" evidence="1">
    <location>
        <position position="343"/>
    </location>
    <ligand>
        <name>Zn(2+)</name>
        <dbReference type="ChEBI" id="CHEBI:29105"/>
        <label>2</label>
    </ligand>
</feature>
<feature type="binding site" evidence="1">
    <location>
        <position position="348"/>
    </location>
    <ligand>
        <name>deoxycholate</name>
        <dbReference type="ChEBI" id="CHEBI:23614"/>
    </ligand>
</feature>
<feature type="modified residue" description="N-acetylmethionine" evidence="1">
    <location>
        <position position="1"/>
    </location>
</feature>
<reference key="1">
    <citation type="submission" date="2004-11" db="EMBL/GenBank/DDBJ databases">
        <authorList>
            <consortium name="The German cDNA consortium"/>
        </authorList>
    </citation>
    <scope>NUCLEOTIDE SEQUENCE [LARGE SCALE MRNA]</scope>
    <source>
        <tissue>Kidney</tissue>
    </source>
</reference>